<evidence type="ECO:0000250" key="1"/>
<evidence type="ECO:0000255" key="2">
    <source>
        <dbReference type="PROSITE-ProRule" id="PRU00169"/>
    </source>
</evidence>
<evidence type="ECO:0000255" key="3">
    <source>
        <dbReference type="PROSITE-ProRule" id="PRU01091"/>
    </source>
</evidence>
<comment type="function">
    <text evidence="1">Member of the two-component regulatory system GraR/GraS involved in resistance against cationic antimicrobial peptides (CAMPs).</text>
</comment>
<comment type="subcellular location">
    <subcellularLocation>
        <location evidence="1">Cytoplasm</location>
    </subcellularLocation>
</comment>
<comment type="PTM">
    <text evidence="1">Phosphorylated by GraS.</text>
</comment>
<gene>
    <name type="primary">graR</name>
    <name type="ordered locus">SERP0312</name>
</gene>
<name>GRAR_STAEQ</name>
<keyword id="KW-0010">Activator</keyword>
<keyword id="KW-0046">Antibiotic resistance</keyword>
<keyword id="KW-0963">Cytoplasm</keyword>
<keyword id="KW-0238">DNA-binding</keyword>
<keyword id="KW-0597">Phosphoprotein</keyword>
<keyword id="KW-1185">Reference proteome</keyword>
<keyword id="KW-0678">Repressor</keyword>
<keyword id="KW-0804">Transcription</keyword>
<keyword id="KW-0805">Transcription regulation</keyword>
<keyword id="KW-0902">Two-component regulatory system</keyword>
<keyword id="KW-0843">Virulence</keyword>
<accession>Q5HR81</accession>
<protein>
    <recommendedName>
        <fullName>Response regulator protein GraR</fullName>
    </recommendedName>
    <alternativeName>
        <fullName>Glycopeptide resistance-associated protein R</fullName>
    </alternativeName>
</protein>
<feature type="chain" id="PRO_0000347910" description="Response regulator protein GraR">
    <location>
        <begin position="1"/>
        <end position="224"/>
    </location>
</feature>
<feature type="domain" description="Response regulatory" evidence="2">
    <location>
        <begin position="2"/>
        <end position="115"/>
    </location>
</feature>
<feature type="DNA-binding region" description="OmpR/PhoB-type" evidence="3">
    <location>
        <begin position="126"/>
        <end position="224"/>
    </location>
</feature>
<feature type="modified residue" description="4-aspartylphosphate" evidence="2">
    <location>
        <position position="51"/>
    </location>
</feature>
<organism>
    <name type="scientific">Staphylococcus epidermidis (strain ATCC 35984 / DSM 28319 / BCRC 17069 / CCUG 31568 / BM 3577 / RP62A)</name>
    <dbReference type="NCBI Taxonomy" id="176279"/>
    <lineage>
        <taxon>Bacteria</taxon>
        <taxon>Bacillati</taxon>
        <taxon>Bacillota</taxon>
        <taxon>Bacilli</taxon>
        <taxon>Bacillales</taxon>
        <taxon>Staphylococcaceae</taxon>
        <taxon>Staphylococcus</taxon>
    </lineage>
</organism>
<proteinExistence type="inferred from homology"/>
<sequence length="224" mass="26301">MQILLVEDDNTLFQELKKELEQWDFNVVGVEDFSHVMETFETFNPEIVILDVQLPKYDGFYWCRKMRQQSNVPILFLSSRDNPMDQVMSMELGADDYMQKPFYTNVLIAKLQAIYRRVYEFGVEEKRTLSWQDATVDLSKDSIQKDDKTIFLSKTEMIILEMLINKRNQIVTRDTLITALWDDEAFVSDNTLTVNVNRLRKKLSEIDMDSAIETKVGKGYLAHE</sequence>
<dbReference type="EMBL" id="CP000029">
    <property type="protein sequence ID" value="AAW53667.1"/>
    <property type="molecule type" value="Genomic_DNA"/>
</dbReference>
<dbReference type="RefSeq" id="WP_001832046.1">
    <property type="nucleotide sequence ID" value="NC_002976.3"/>
</dbReference>
<dbReference type="SMR" id="Q5HR81"/>
<dbReference type="STRING" id="176279.SERP0312"/>
<dbReference type="GeneID" id="50019417"/>
<dbReference type="KEGG" id="ser:SERP0312"/>
<dbReference type="eggNOG" id="COG0745">
    <property type="taxonomic scope" value="Bacteria"/>
</dbReference>
<dbReference type="HOGENOM" id="CLU_000445_30_3_9"/>
<dbReference type="Proteomes" id="UP000000531">
    <property type="component" value="Chromosome"/>
</dbReference>
<dbReference type="GO" id="GO:0005829">
    <property type="term" value="C:cytosol"/>
    <property type="evidence" value="ECO:0007669"/>
    <property type="project" value="TreeGrafter"/>
</dbReference>
<dbReference type="GO" id="GO:0032993">
    <property type="term" value="C:protein-DNA complex"/>
    <property type="evidence" value="ECO:0007669"/>
    <property type="project" value="TreeGrafter"/>
</dbReference>
<dbReference type="GO" id="GO:0000156">
    <property type="term" value="F:phosphorelay response regulator activity"/>
    <property type="evidence" value="ECO:0007669"/>
    <property type="project" value="TreeGrafter"/>
</dbReference>
<dbReference type="GO" id="GO:0000976">
    <property type="term" value="F:transcription cis-regulatory region binding"/>
    <property type="evidence" value="ECO:0007669"/>
    <property type="project" value="TreeGrafter"/>
</dbReference>
<dbReference type="GO" id="GO:0006355">
    <property type="term" value="P:regulation of DNA-templated transcription"/>
    <property type="evidence" value="ECO:0007669"/>
    <property type="project" value="InterPro"/>
</dbReference>
<dbReference type="GO" id="GO:0046677">
    <property type="term" value="P:response to antibiotic"/>
    <property type="evidence" value="ECO:0007669"/>
    <property type="project" value="UniProtKB-KW"/>
</dbReference>
<dbReference type="CDD" id="cd18159">
    <property type="entry name" value="REC_OmpR_NsrR-like"/>
    <property type="match status" value="1"/>
</dbReference>
<dbReference type="CDD" id="cd00383">
    <property type="entry name" value="trans_reg_C"/>
    <property type="match status" value="1"/>
</dbReference>
<dbReference type="FunFam" id="3.40.50.2300:FF:000232">
    <property type="entry name" value="Response regulator GraR"/>
    <property type="match status" value="1"/>
</dbReference>
<dbReference type="FunFam" id="1.10.10.10:FF:000546">
    <property type="entry name" value="Two-component response regulator GraR"/>
    <property type="match status" value="1"/>
</dbReference>
<dbReference type="Gene3D" id="3.40.50.2300">
    <property type="match status" value="1"/>
</dbReference>
<dbReference type="Gene3D" id="1.10.10.10">
    <property type="entry name" value="Winged helix-like DNA-binding domain superfamily/Winged helix DNA-binding domain"/>
    <property type="match status" value="1"/>
</dbReference>
<dbReference type="InterPro" id="IPR011006">
    <property type="entry name" value="CheY-like_superfamily"/>
</dbReference>
<dbReference type="InterPro" id="IPR001867">
    <property type="entry name" value="OmpR/PhoB-type_DNA-bd"/>
</dbReference>
<dbReference type="InterPro" id="IPR016032">
    <property type="entry name" value="Sig_transdc_resp-reg_C-effctor"/>
</dbReference>
<dbReference type="InterPro" id="IPR001789">
    <property type="entry name" value="Sig_transdc_resp-reg_receiver"/>
</dbReference>
<dbReference type="InterPro" id="IPR039420">
    <property type="entry name" value="WalR-like"/>
</dbReference>
<dbReference type="InterPro" id="IPR036388">
    <property type="entry name" value="WH-like_DNA-bd_sf"/>
</dbReference>
<dbReference type="PANTHER" id="PTHR48111">
    <property type="entry name" value="REGULATOR OF RPOS"/>
    <property type="match status" value="1"/>
</dbReference>
<dbReference type="PANTHER" id="PTHR48111:SF27">
    <property type="entry name" value="SENSORY TRANSDUCTION PROTEIN BCER"/>
    <property type="match status" value="1"/>
</dbReference>
<dbReference type="Pfam" id="PF00072">
    <property type="entry name" value="Response_reg"/>
    <property type="match status" value="1"/>
</dbReference>
<dbReference type="Pfam" id="PF00486">
    <property type="entry name" value="Trans_reg_C"/>
    <property type="match status" value="1"/>
</dbReference>
<dbReference type="SMART" id="SM00448">
    <property type="entry name" value="REC"/>
    <property type="match status" value="1"/>
</dbReference>
<dbReference type="SMART" id="SM00862">
    <property type="entry name" value="Trans_reg_C"/>
    <property type="match status" value="1"/>
</dbReference>
<dbReference type="SUPFAM" id="SSF46894">
    <property type="entry name" value="C-terminal effector domain of the bipartite response regulators"/>
    <property type="match status" value="1"/>
</dbReference>
<dbReference type="SUPFAM" id="SSF52172">
    <property type="entry name" value="CheY-like"/>
    <property type="match status" value="1"/>
</dbReference>
<dbReference type="PROSITE" id="PS51755">
    <property type="entry name" value="OMPR_PHOB"/>
    <property type="match status" value="1"/>
</dbReference>
<dbReference type="PROSITE" id="PS50110">
    <property type="entry name" value="RESPONSE_REGULATORY"/>
    <property type="match status" value="1"/>
</dbReference>
<reference key="1">
    <citation type="journal article" date="2005" name="J. Bacteriol.">
        <title>Insights on evolution of virulence and resistance from the complete genome analysis of an early methicillin-resistant Staphylococcus aureus strain and a biofilm-producing methicillin-resistant Staphylococcus epidermidis strain.</title>
        <authorList>
            <person name="Gill S.R."/>
            <person name="Fouts D.E."/>
            <person name="Archer G.L."/>
            <person name="Mongodin E.F."/>
            <person name="DeBoy R.T."/>
            <person name="Ravel J."/>
            <person name="Paulsen I.T."/>
            <person name="Kolonay J.F."/>
            <person name="Brinkac L.M."/>
            <person name="Beanan M.J."/>
            <person name="Dodson R.J."/>
            <person name="Daugherty S.C."/>
            <person name="Madupu R."/>
            <person name="Angiuoli S.V."/>
            <person name="Durkin A.S."/>
            <person name="Haft D.H."/>
            <person name="Vamathevan J.J."/>
            <person name="Khouri H."/>
            <person name="Utterback T.R."/>
            <person name="Lee C."/>
            <person name="Dimitrov G."/>
            <person name="Jiang L."/>
            <person name="Qin H."/>
            <person name="Weidman J."/>
            <person name="Tran K."/>
            <person name="Kang K.H."/>
            <person name="Hance I.R."/>
            <person name="Nelson K.E."/>
            <person name="Fraser C.M."/>
        </authorList>
    </citation>
    <scope>NUCLEOTIDE SEQUENCE [LARGE SCALE GENOMIC DNA]</scope>
    <source>
        <strain>ATCC 35984 / DSM 28319 / BCRC 17069 / CCUG 31568 / BM 3577 / RP62A</strain>
    </source>
</reference>